<keyword id="KW-1185">Reference proteome</keyword>
<organism>
    <name type="scientific">Malacoplasma penetrans (strain HF-2)</name>
    <name type="common">Mycoplasma penetrans</name>
    <dbReference type="NCBI Taxonomy" id="272633"/>
    <lineage>
        <taxon>Bacteria</taxon>
        <taxon>Bacillati</taxon>
        <taxon>Mycoplasmatota</taxon>
        <taxon>Mycoplasmoidales</taxon>
        <taxon>Mycoplasmoidaceae</taxon>
        <taxon>Malacoplasma</taxon>
    </lineage>
</organism>
<comment type="function">
    <text evidence="1">Might take part in the signal recognition particle (SRP) pathway. This is inferred from the conservation of its genetic proximity to ftsY/ffh. May be a regulatory protein.</text>
</comment>
<comment type="similarity">
    <text evidence="1">Belongs to the UPF0122 family.</text>
</comment>
<sequence length="107" mass="12804">MKELDLSQISLLIDFYGNLLTDKQLQNLIDYYFNDLSLSEIAANNNVSRTAIHDSIKKSKNELEQFENKLKFIYRFNLRKEIYKQIKDNNLLDQLLETEVEQLWKTK</sequence>
<dbReference type="EMBL" id="BA000026">
    <property type="protein sequence ID" value="BAC44275.1"/>
    <property type="molecule type" value="Genomic_DNA"/>
</dbReference>
<dbReference type="RefSeq" id="WP_011077309.1">
    <property type="nucleotide sequence ID" value="NC_004432.1"/>
</dbReference>
<dbReference type="SMR" id="Q8EVS4"/>
<dbReference type="FunCoup" id="Q8EVS4">
    <property type="interactions" value="18"/>
</dbReference>
<dbReference type="STRING" id="272633.gene:10731602"/>
<dbReference type="KEGG" id="mpe:MYPE4850"/>
<dbReference type="eggNOG" id="COG2739">
    <property type="taxonomic scope" value="Bacteria"/>
</dbReference>
<dbReference type="HOGENOM" id="CLU_129218_1_1_14"/>
<dbReference type="InParanoid" id="Q8EVS4"/>
<dbReference type="Proteomes" id="UP000002522">
    <property type="component" value="Chromosome"/>
</dbReference>
<dbReference type="Gene3D" id="1.10.10.10">
    <property type="entry name" value="Winged helix-like DNA-binding domain superfamily/Winged helix DNA-binding domain"/>
    <property type="match status" value="1"/>
</dbReference>
<dbReference type="HAMAP" id="MF_00245">
    <property type="entry name" value="UPF0122"/>
    <property type="match status" value="1"/>
</dbReference>
<dbReference type="InterPro" id="IPR013324">
    <property type="entry name" value="RNA_pol_sigma_r3/r4-like"/>
</dbReference>
<dbReference type="InterPro" id="IPR007394">
    <property type="entry name" value="UPF0122"/>
</dbReference>
<dbReference type="InterPro" id="IPR054831">
    <property type="entry name" value="UPF0122_fam_protein"/>
</dbReference>
<dbReference type="InterPro" id="IPR036388">
    <property type="entry name" value="WH-like_DNA-bd_sf"/>
</dbReference>
<dbReference type="NCBIfam" id="NF045758">
    <property type="entry name" value="YlxM"/>
    <property type="match status" value="1"/>
</dbReference>
<dbReference type="PANTHER" id="PTHR40083">
    <property type="entry name" value="UPF0122 PROTEIN CBO2450/CLC_2298"/>
    <property type="match status" value="1"/>
</dbReference>
<dbReference type="PANTHER" id="PTHR40083:SF1">
    <property type="entry name" value="UPF0122 PROTEIN YLXM"/>
    <property type="match status" value="1"/>
</dbReference>
<dbReference type="Pfam" id="PF04297">
    <property type="entry name" value="UPF0122"/>
    <property type="match status" value="1"/>
</dbReference>
<dbReference type="SUPFAM" id="SSF88659">
    <property type="entry name" value="Sigma3 and sigma4 domains of RNA polymerase sigma factors"/>
    <property type="match status" value="1"/>
</dbReference>
<proteinExistence type="inferred from homology"/>
<accession>Q8EVS4</accession>
<name>Y485_MALP2</name>
<feature type="chain" id="PRO_1000197591" description="UPF0122 protein MYPE4850">
    <location>
        <begin position="1"/>
        <end position="107"/>
    </location>
</feature>
<protein>
    <recommendedName>
        <fullName evidence="1">UPF0122 protein MYPE4850</fullName>
    </recommendedName>
</protein>
<evidence type="ECO:0000255" key="1">
    <source>
        <dbReference type="HAMAP-Rule" id="MF_00245"/>
    </source>
</evidence>
<reference key="1">
    <citation type="journal article" date="2002" name="Nucleic Acids Res.">
        <title>The complete genomic sequence of Mycoplasma penetrans, an intracellular bacterial pathogen in humans.</title>
        <authorList>
            <person name="Sasaki Y."/>
            <person name="Ishikawa J."/>
            <person name="Yamashita A."/>
            <person name="Oshima K."/>
            <person name="Kenri T."/>
            <person name="Furuya K."/>
            <person name="Yoshino C."/>
            <person name="Horino A."/>
            <person name="Shiba T."/>
            <person name="Sasaki T."/>
            <person name="Hattori M."/>
        </authorList>
    </citation>
    <scope>NUCLEOTIDE SEQUENCE [LARGE SCALE GENOMIC DNA]</scope>
    <source>
        <strain>HF-2</strain>
    </source>
</reference>
<gene>
    <name type="ordered locus">MYPE4850</name>
</gene>